<protein>
    <recommendedName>
        <fullName evidence="1">NADH-quinone oxidoreductase subunit H</fullName>
        <ecNumber evidence="1">7.1.1.-</ecNumber>
    </recommendedName>
    <alternativeName>
        <fullName evidence="1">NADH dehydrogenase I subunit H</fullName>
    </alternativeName>
    <alternativeName>
        <fullName evidence="1">NDH-1 subunit H</fullName>
    </alternativeName>
</protein>
<sequence>MSWLTPDLIDILLSILKAVVILLVVVTCGAFMSFGERRLLGLFQNRYGPNRVGWGGSLQLVADMIKMFFKEDWIPRFSDRVIFTLAPVIAFTSLLLAFAIVPVSPTWVVADLNIGILFFLMMAGLAVYAVLFAGWSSNNKYSLLGAMRASAQTLSYEVFLGLSLMGVVAQAGSFNMTDIVNNQAHLWNVIPQFFGFVTFAIAGVAVCHRHPFDQPEAEQELADGYHIEYSGMKFGLFFVGEYIGIVTVSALIVTLFFGGWNGPWLPPFIWFALKTAFFMMMFILIRASLPRPRYDQVMSFGWKVCLPLTLVNLLVTAAVILWQAQ</sequence>
<organism>
    <name type="scientific">Klebsiella pneumoniae (strain 342)</name>
    <dbReference type="NCBI Taxonomy" id="507522"/>
    <lineage>
        <taxon>Bacteria</taxon>
        <taxon>Pseudomonadati</taxon>
        <taxon>Pseudomonadota</taxon>
        <taxon>Gammaproteobacteria</taxon>
        <taxon>Enterobacterales</taxon>
        <taxon>Enterobacteriaceae</taxon>
        <taxon>Klebsiella/Raoultella group</taxon>
        <taxon>Klebsiella</taxon>
        <taxon>Klebsiella pneumoniae complex</taxon>
    </lineage>
</organism>
<keyword id="KW-0997">Cell inner membrane</keyword>
<keyword id="KW-1003">Cell membrane</keyword>
<keyword id="KW-0472">Membrane</keyword>
<keyword id="KW-0520">NAD</keyword>
<keyword id="KW-0874">Quinone</keyword>
<keyword id="KW-1278">Translocase</keyword>
<keyword id="KW-0812">Transmembrane</keyword>
<keyword id="KW-1133">Transmembrane helix</keyword>
<keyword id="KW-0830">Ubiquinone</keyword>
<evidence type="ECO:0000255" key="1">
    <source>
        <dbReference type="HAMAP-Rule" id="MF_01350"/>
    </source>
</evidence>
<proteinExistence type="inferred from homology"/>
<gene>
    <name evidence="1" type="primary">nuoH</name>
    <name type="ordered locus">KPK_1477</name>
</gene>
<name>NUOH_KLEP3</name>
<reference key="1">
    <citation type="journal article" date="2008" name="PLoS Genet.">
        <title>Complete genome sequence of the N2-fixing broad host range endophyte Klebsiella pneumoniae 342 and virulence predictions verified in mice.</title>
        <authorList>
            <person name="Fouts D.E."/>
            <person name="Tyler H.L."/>
            <person name="DeBoy R.T."/>
            <person name="Daugherty S."/>
            <person name="Ren Q."/>
            <person name="Badger J.H."/>
            <person name="Durkin A.S."/>
            <person name="Huot H."/>
            <person name="Shrivastava S."/>
            <person name="Kothari S."/>
            <person name="Dodson R.J."/>
            <person name="Mohamoud Y."/>
            <person name="Khouri H."/>
            <person name="Roesch L.F.W."/>
            <person name="Krogfelt K.A."/>
            <person name="Struve C."/>
            <person name="Triplett E.W."/>
            <person name="Methe B.A."/>
        </authorList>
    </citation>
    <scope>NUCLEOTIDE SEQUENCE [LARGE SCALE GENOMIC DNA]</scope>
    <source>
        <strain>342</strain>
    </source>
</reference>
<accession>B5XNW0</accession>
<dbReference type="EC" id="7.1.1.-" evidence="1"/>
<dbReference type="EMBL" id="CP000964">
    <property type="protein sequence ID" value="ACI08720.1"/>
    <property type="molecule type" value="Genomic_DNA"/>
</dbReference>
<dbReference type="SMR" id="B5XNW0"/>
<dbReference type="KEGG" id="kpe:KPK_1477"/>
<dbReference type="HOGENOM" id="CLU_015134_0_1_6"/>
<dbReference type="Proteomes" id="UP000001734">
    <property type="component" value="Chromosome"/>
</dbReference>
<dbReference type="GO" id="GO:0005886">
    <property type="term" value="C:plasma membrane"/>
    <property type="evidence" value="ECO:0007669"/>
    <property type="project" value="UniProtKB-SubCell"/>
</dbReference>
<dbReference type="GO" id="GO:0003954">
    <property type="term" value="F:NADH dehydrogenase activity"/>
    <property type="evidence" value="ECO:0007669"/>
    <property type="project" value="TreeGrafter"/>
</dbReference>
<dbReference type="GO" id="GO:0016655">
    <property type="term" value="F:oxidoreductase activity, acting on NAD(P)H, quinone or similar compound as acceptor"/>
    <property type="evidence" value="ECO:0007669"/>
    <property type="project" value="UniProtKB-UniRule"/>
</dbReference>
<dbReference type="GO" id="GO:0048038">
    <property type="term" value="F:quinone binding"/>
    <property type="evidence" value="ECO:0007669"/>
    <property type="project" value="UniProtKB-KW"/>
</dbReference>
<dbReference type="GO" id="GO:0009060">
    <property type="term" value="P:aerobic respiration"/>
    <property type="evidence" value="ECO:0007669"/>
    <property type="project" value="TreeGrafter"/>
</dbReference>
<dbReference type="HAMAP" id="MF_01350">
    <property type="entry name" value="NDH1_NuoH"/>
    <property type="match status" value="1"/>
</dbReference>
<dbReference type="InterPro" id="IPR001694">
    <property type="entry name" value="NADH_UbQ_OxRdtase_su1/FPO"/>
</dbReference>
<dbReference type="InterPro" id="IPR018086">
    <property type="entry name" value="NADH_UbQ_OxRdtase_su1_CS"/>
</dbReference>
<dbReference type="NCBIfam" id="NF004740">
    <property type="entry name" value="PRK06076.1-1"/>
    <property type="match status" value="1"/>
</dbReference>
<dbReference type="NCBIfam" id="NF004741">
    <property type="entry name" value="PRK06076.1-2"/>
    <property type="match status" value="1"/>
</dbReference>
<dbReference type="PANTHER" id="PTHR11432">
    <property type="entry name" value="NADH DEHYDROGENASE SUBUNIT 1"/>
    <property type="match status" value="1"/>
</dbReference>
<dbReference type="PANTHER" id="PTHR11432:SF3">
    <property type="entry name" value="NADH-UBIQUINONE OXIDOREDUCTASE CHAIN 1"/>
    <property type="match status" value="1"/>
</dbReference>
<dbReference type="Pfam" id="PF00146">
    <property type="entry name" value="NADHdh"/>
    <property type="match status" value="1"/>
</dbReference>
<dbReference type="PROSITE" id="PS00667">
    <property type="entry name" value="COMPLEX1_ND1_1"/>
    <property type="match status" value="1"/>
</dbReference>
<dbReference type="PROSITE" id="PS00668">
    <property type="entry name" value="COMPLEX1_ND1_2"/>
    <property type="match status" value="1"/>
</dbReference>
<feature type="chain" id="PRO_1000143604" description="NADH-quinone oxidoreductase subunit H">
    <location>
        <begin position="1"/>
        <end position="325"/>
    </location>
</feature>
<feature type="transmembrane region" description="Helical" evidence="1">
    <location>
        <begin position="11"/>
        <end position="31"/>
    </location>
</feature>
<feature type="transmembrane region" description="Helical" evidence="1">
    <location>
        <begin position="81"/>
        <end position="101"/>
    </location>
</feature>
<feature type="transmembrane region" description="Helical" evidence="1">
    <location>
        <begin position="114"/>
        <end position="134"/>
    </location>
</feature>
<feature type="transmembrane region" description="Helical" evidence="1">
    <location>
        <begin position="154"/>
        <end position="174"/>
    </location>
</feature>
<feature type="transmembrane region" description="Helical" evidence="1">
    <location>
        <begin position="186"/>
        <end position="206"/>
    </location>
</feature>
<feature type="transmembrane region" description="Helical" evidence="1">
    <location>
        <begin position="237"/>
        <end position="257"/>
    </location>
</feature>
<feature type="transmembrane region" description="Helical" evidence="1">
    <location>
        <begin position="265"/>
        <end position="285"/>
    </location>
</feature>
<feature type="transmembrane region" description="Helical" evidence="1">
    <location>
        <begin position="304"/>
        <end position="324"/>
    </location>
</feature>
<comment type="function">
    <text evidence="1">NDH-1 shuttles electrons from NADH, via FMN and iron-sulfur (Fe-S) centers, to quinones in the respiratory chain. The immediate electron acceptor for the enzyme in this species is believed to be ubiquinone. Couples the redox reaction to proton translocation (for every two electrons transferred, four hydrogen ions are translocated across the cytoplasmic membrane), and thus conserves the redox energy in a proton gradient. This subunit may bind ubiquinone.</text>
</comment>
<comment type="catalytic activity">
    <reaction evidence="1">
        <text>a quinone + NADH + 5 H(+)(in) = a quinol + NAD(+) + 4 H(+)(out)</text>
        <dbReference type="Rhea" id="RHEA:57888"/>
        <dbReference type="ChEBI" id="CHEBI:15378"/>
        <dbReference type="ChEBI" id="CHEBI:24646"/>
        <dbReference type="ChEBI" id="CHEBI:57540"/>
        <dbReference type="ChEBI" id="CHEBI:57945"/>
        <dbReference type="ChEBI" id="CHEBI:132124"/>
    </reaction>
</comment>
<comment type="subunit">
    <text evidence="1">NDH-1 is composed of 13 different subunits. Subunits NuoA, H, J, K, L, M, N constitute the membrane sector of the complex.</text>
</comment>
<comment type="subcellular location">
    <subcellularLocation>
        <location evidence="1">Cell inner membrane</location>
        <topology evidence="1">Multi-pass membrane protein</topology>
    </subcellularLocation>
</comment>
<comment type="similarity">
    <text evidence="1">Belongs to the complex I subunit 1 family.</text>
</comment>